<comment type="subunit">
    <text>Interacts with actin.</text>
</comment>
<comment type="subcellular location">
    <subcellularLocation>
        <location evidence="3">Nucleus</location>
    </subcellularLocation>
    <subcellularLocation>
        <location evidence="3">Cytoplasm</location>
        <location evidence="3">Cytoskeleton</location>
    </subcellularLocation>
    <text>localizes at the centrosome.</text>
</comment>
<feature type="chain" id="PRO_0000388373" description="Actin-binding protein F">
    <location>
        <begin position="1"/>
        <end position="2364"/>
    </location>
</feature>
<feature type="region of interest" description="Disordered" evidence="2">
    <location>
        <begin position="138"/>
        <end position="168"/>
    </location>
</feature>
<feature type="region of interest" description="Disordered" evidence="2">
    <location>
        <begin position="1087"/>
        <end position="1111"/>
    </location>
</feature>
<feature type="region of interest" description="Disordered" evidence="2">
    <location>
        <begin position="1412"/>
        <end position="1435"/>
    </location>
</feature>
<feature type="region of interest" description="Disordered" evidence="2">
    <location>
        <begin position="1929"/>
        <end position="2088"/>
    </location>
</feature>
<feature type="coiled-coil region" evidence="1">
    <location>
        <begin position="1960"/>
        <end position="2017"/>
    </location>
</feature>
<feature type="coiled-coil region" evidence="1">
    <location>
        <begin position="2129"/>
        <end position="2173"/>
    </location>
</feature>
<feature type="compositionally biased region" description="Low complexity" evidence="2">
    <location>
        <begin position="138"/>
        <end position="157"/>
    </location>
</feature>
<feature type="compositionally biased region" description="Basic and acidic residues" evidence="2">
    <location>
        <begin position="1092"/>
        <end position="1111"/>
    </location>
</feature>
<feature type="compositionally biased region" description="Low complexity" evidence="2">
    <location>
        <begin position="1412"/>
        <end position="1428"/>
    </location>
</feature>
<feature type="compositionally biased region" description="Low complexity" evidence="2">
    <location>
        <begin position="1932"/>
        <end position="1960"/>
    </location>
</feature>
<feature type="compositionally biased region" description="Basic and acidic residues" evidence="2">
    <location>
        <begin position="1961"/>
        <end position="2010"/>
    </location>
</feature>
<feature type="compositionally biased region" description="Low complexity" evidence="2">
    <location>
        <begin position="2027"/>
        <end position="2047"/>
    </location>
</feature>
<feature type="compositionally biased region" description="Basic and acidic residues" evidence="2">
    <location>
        <begin position="2052"/>
        <end position="2070"/>
    </location>
</feature>
<feature type="compositionally biased region" description="Acidic residues" evidence="2">
    <location>
        <begin position="2071"/>
        <end position="2081"/>
    </location>
</feature>
<gene>
    <name type="primary">abpF</name>
    <name type="synonym">kenN</name>
    <name type="ORF">DDB_0230207</name>
</gene>
<organism>
    <name type="scientific">Dictyostelium discoideum</name>
    <name type="common">Social amoeba</name>
    <dbReference type="NCBI Taxonomy" id="44689"/>
    <lineage>
        <taxon>Eukaryota</taxon>
        <taxon>Amoebozoa</taxon>
        <taxon>Evosea</taxon>
        <taxon>Eumycetozoa</taxon>
        <taxon>Dictyostelia</taxon>
        <taxon>Dictyosteliales</taxon>
        <taxon>Dictyosteliaceae</taxon>
        <taxon>Dictyostelium</taxon>
    </lineage>
</organism>
<protein>
    <recommendedName>
        <fullName>Actin-binding protein F</fullName>
    </recommendedName>
</protein>
<sequence>MTVSNNKKFEENYVLASDIEEKEKLLGTLIGGSPQYFYYNVIHLLNVDPTLSDSKNREKYQKLMKDWSPESKPIPVTPYGGNNNYESTQQYKSVDLRQKLLSFRQDNVNPSALANNVNDMFEELRYLLSLTFSYTQTTHQTSPTTETTTTPSSSSSSSHDDKSESTLDESLVNKKTVIESIINQYPYKVDYISPNSFEYVLNNFTLPESAEKSIVQKLKYPIVPNDKLQQLLSHHKGSFGSLKIHENLTLEQMEKHIEKNPEHLDSAYVKLYLEKLLPTNELHDWETLKPVQEQFYQSASKFVSNLPTSLNTFKLLIYHHYIKFQISDNKYDQSIIEKYFQLPRDTYYYVEPDRLKSNPQLSKFNDSFNGLKSVSQDDDEKLISFLLKKLFLKENSIKSYQSYFRPNYLNLILAESKLLSNDSSPEKWIEMIDNHTKVQELKDRVDIEFLPTNREYYHPDDDVVIECAIKNVNTLLVKVFEISTFNYYKSENKKIDSNINLDGLIASQELSFDYSEQAPIEKVEKKFDFPNLKGKRGIFVIEFIGNGKSSRSMIQKGDLHFIVETSPIGQVIKIIDQDSIKVQKSSVYIDGNAYNSNDDGDIKIPFSSSTSQKSIILMAKIGDSDVFASLKKFTHQSEHYSLSGGIFVENSSLLQNEKAPIVVRVKLFLGDTQISNNYLEEPSLTITSSDNSESPVVNSKEIKPFALFDNKESVYQYKVQEGLNSLTVRFEAKVRALSRNNNQETLSFESTFQVNTINQTDQISEFYLERCLAKDGCSLGYQLCHLGKGGDPFSHLDVSMDFQHWLTSERIYTTLKTDKNGKIHLGSLADIEQLNVNGSYATFNFPIKRQQQFTYPSQINIKLGETIRLPYLGNEKSVSHSQINFFQLGGVDDRNFVVHDLLKKSVTIENKNELLINGLGVGRYLLILAGSIQSSNTVEILIDVVDGQFREGYLVGPSRIVSYNESNVKSLFFDTNIDTKHNQLQVKFKNHSPSTRVHVFSSYFEPTNSLNSSLSLSRGTSQSYQEYSVKPKSLYFNGRSLGDEVNYILNRKTSKKLLPGNSLKKPSLLVQPWSIGKTTNSTNTLKQASKYNESEVKDEKSMRNRQVEKRRVSSTNRSPFLEFLSHPSILLLNLEPSSTDGIVNIDLSQLVEAGSTIHIHAVDNDSIFTKEIVISDPSSSSSINHFKDTKLVRPLDSSLHYKEEKLITTVEPNSPFEILNVNSSKYTVYDSLDKVLSLMKTLNKSYLQDFSFIAEWESLSFEKKKEKFSKFTCHELNFFIYKKDKEFFDQVVLPLVQTKGYKTFIDHYLCADRKKLEIFVIDSNRFNTLNALEMVLLGELFPEHSDSISNLLKQKVGFSPISPSQYDTNFKIALNQLDTDIESLKSGDDDLYDDGSNLEPMSVGGGGGFGYNNNSNNNNNTTNSNSFGDAKRAPMKKKMVNKESTSLMMDCAAPMMMMASAPCPAPGAVPMAALRSARLASASPAPPAPITRAYEAAQIYQPIEKTEELAETYYYKQLNPHSSLIPVNEFWLDYANHIKSQSKTPFVSKYIAFISSSFAESMMALSVLDFPFTVKDNTTQVRPKNGKLSMKPTTPIVVFHQELVSGSIEKQSDILVTQHFFDPQNQFTYIDGEQEELYINDQFLVSKVYGAMVVIANLSSKQKKLDALLEIPKGSIAVGPSPFVTRSKSVNLSAYSTTRLQYYFYFPEAGKFPHFPAHVSEKQNIIANVTPFTFSVVLKPSIVNHLSWEYIANQGTLESILEYLSKNNLYRVDFYHLYHRYTDKKVWDKVIELLKKLKFYESITWSFSIHHKNFVYLKDYLSEQIHSLSMKSIDAPSIYVDPFENNFIKFLEYSPLVNSRTHQIGDERKILNNKLSNQYYEFCSLLSLKLNPSDTELLSLAYYLLLQDRFDESIKIMKRIGKHPVSIPKLISSSTTTDSKSTHSSVISSSSSSNLSTTTDSSKDKKKLEKEEKQREKERKQKEKEDKKREKEELKKKEKEEKKKKEEEKKLKKKSGSEATSPSVDPATPTTTTTTEATTTTTTTTATSQESIKPEKIASDDEHDDHHHDEHDEEDDDDEPLIDMSEFNQPSCLPEMKVQYDYLLSYLDFFNPNPTVAAENSKKYENYPVQRWNSLFKDLRNKVDQVSNKDSVEIDYEKEIDRERRQNKMASNEPTFDISSESNRTISVNYSNLVDITVSYYVMDIEHLFSTNPFVQQELGHFLYVTPNKKESFLLKDKSGTFNFKIPNEFANSNVVIDVVSAQIHHNITVYSNNLAVYITEKVGQLRVVHKQKSQPISKTYIKVYSKNKNGSVEFFKDGYTDIAGYFDYSTVSSLDISNVSKLSILVLSNQYGAVIKEAKPPGF</sequence>
<name>ABPF_DICDI</name>
<reference key="1">
    <citation type="journal article" date="2005" name="Nature">
        <title>The genome of the social amoeba Dictyostelium discoideum.</title>
        <authorList>
            <person name="Eichinger L."/>
            <person name="Pachebat J.A."/>
            <person name="Gloeckner G."/>
            <person name="Rajandream M.A."/>
            <person name="Sucgang R."/>
            <person name="Berriman M."/>
            <person name="Song J."/>
            <person name="Olsen R."/>
            <person name="Szafranski K."/>
            <person name="Xu Q."/>
            <person name="Tunggal B."/>
            <person name="Kummerfeld S."/>
            <person name="Madera M."/>
            <person name="Konfortov B.A."/>
            <person name="Rivero F."/>
            <person name="Bankier A.T."/>
            <person name="Lehmann R."/>
            <person name="Hamlin N."/>
            <person name="Davies R."/>
            <person name="Gaudet P."/>
            <person name="Fey P."/>
            <person name="Pilcher K."/>
            <person name="Chen G."/>
            <person name="Saunders D."/>
            <person name="Sodergren E.J."/>
            <person name="Davis P."/>
            <person name="Kerhornou A."/>
            <person name="Nie X."/>
            <person name="Hall N."/>
            <person name="Anjard C."/>
            <person name="Hemphill L."/>
            <person name="Bason N."/>
            <person name="Farbrother P."/>
            <person name="Desany B."/>
            <person name="Just E."/>
            <person name="Morio T."/>
            <person name="Rost R."/>
            <person name="Churcher C.M."/>
            <person name="Cooper J."/>
            <person name="Haydock S."/>
            <person name="van Driessche N."/>
            <person name="Cronin A."/>
            <person name="Goodhead I."/>
            <person name="Muzny D.M."/>
            <person name="Mourier T."/>
            <person name="Pain A."/>
            <person name="Lu M."/>
            <person name="Harper D."/>
            <person name="Lindsay R."/>
            <person name="Hauser H."/>
            <person name="James K.D."/>
            <person name="Quiles M."/>
            <person name="Madan Babu M."/>
            <person name="Saito T."/>
            <person name="Buchrieser C."/>
            <person name="Wardroper A."/>
            <person name="Felder M."/>
            <person name="Thangavelu M."/>
            <person name="Johnson D."/>
            <person name="Knights A."/>
            <person name="Loulseged H."/>
            <person name="Mungall K.L."/>
            <person name="Oliver K."/>
            <person name="Price C."/>
            <person name="Quail M.A."/>
            <person name="Urushihara H."/>
            <person name="Hernandez J."/>
            <person name="Rabbinowitsch E."/>
            <person name="Steffen D."/>
            <person name="Sanders M."/>
            <person name="Ma J."/>
            <person name="Kohara Y."/>
            <person name="Sharp S."/>
            <person name="Simmonds M.N."/>
            <person name="Spiegler S."/>
            <person name="Tivey A."/>
            <person name="Sugano S."/>
            <person name="White B."/>
            <person name="Walker D."/>
            <person name="Woodward J.R."/>
            <person name="Winckler T."/>
            <person name="Tanaka Y."/>
            <person name="Shaulsky G."/>
            <person name="Schleicher M."/>
            <person name="Weinstock G.M."/>
            <person name="Rosenthal A."/>
            <person name="Cox E.C."/>
            <person name="Chisholm R.L."/>
            <person name="Gibbs R.A."/>
            <person name="Loomis W.F."/>
            <person name="Platzer M."/>
            <person name="Kay R.R."/>
            <person name="Williams J.G."/>
            <person name="Dear P.H."/>
            <person name="Noegel A.A."/>
            <person name="Barrell B.G."/>
            <person name="Kuspa A."/>
        </authorList>
    </citation>
    <scope>NUCLEOTIDE SEQUENCE [LARGE SCALE GENOMIC DNA]</scope>
    <source>
        <strain>AX4</strain>
    </source>
</reference>
<reference key="2">
    <citation type="thesis" date="1993" institute="Standford University" country="United States">
        <authorList>
            <person name="Niebling K.R."/>
        </authorList>
    </citation>
    <scope>ACTIN-BINDING</scope>
    <scope>SUBCELLULAR LOCATION</scope>
</reference>
<reference key="3">
    <citation type="submission" date="2009-07" db="UniProtKB">
        <authorList>
            <person name="Bienvenut W.V."/>
            <person name="Ura S."/>
            <person name="Insall R.H."/>
        </authorList>
    </citation>
    <scope>PROTEIN SEQUENCE OF 364-372; 537-548; 850-862; 1040-1052 AND 1356-1371</scope>
    <scope>IDENTIFICATION BY MASS SPECTROMETRY</scope>
    <source>
        <strain>AX2</strain>
    </source>
</reference>
<keyword id="KW-0175">Coiled coil</keyword>
<keyword id="KW-0963">Cytoplasm</keyword>
<keyword id="KW-0206">Cytoskeleton</keyword>
<keyword id="KW-0903">Direct protein sequencing</keyword>
<keyword id="KW-0539">Nucleus</keyword>
<keyword id="KW-1185">Reference proteome</keyword>
<dbReference type="EMBL" id="AAFI02000177">
    <property type="protein sequence ID" value="EAL61598.1"/>
    <property type="molecule type" value="Genomic_DNA"/>
</dbReference>
<dbReference type="RefSeq" id="XP_635154.1">
    <property type="nucleotide sequence ID" value="XM_630062.1"/>
</dbReference>
<dbReference type="STRING" id="44689.Q54ET6"/>
<dbReference type="PaxDb" id="44689-DDB0230207"/>
<dbReference type="EnsemblProtists" id="EAL61598">
    <property type="protein sequence ID" value="EAL61598"/>
    <property type="gene ID" value="DDB_G0291229"/>
</dbReference>
<dbReference type="GeneID" id="8628100"/>
<dbReference type="KEGG" id="ddi:DDB_G0291229"/>
<dbReference type="dictyBase" id="DDB_G0291229">
    <property type="gene designation" value="abpF"/>
</dbReference>
<dbReference type="VEuPathDB" id="AmoebaDB:DDB_G0291229"/>
<dbReference type="eggNOG" id="ENOG502QT0W">
    <property type="taxonomic scope" value="Eukaryota"/>
</dbReference>
<dbReference type="HOGENOM" id="CLU_230958_0_0_1"/>
<dbReference type="InParanoid" id="Q54ET6"/>
<dbReference type="OMA" id="KYACHEL"/>
<dbReference type="PRO" id="PR:Q54ET6"/>
<dbReference type="Proteomes" id="UP000002195">
    <property type="component" value="Chromosome 6"/>
</dbReference>
<dbReference type="GO" id="GO:0005737">
    <property type="term" value="C:cytoplasm"/>
    <property type="evidence" value="ECO:0007669"/>
    <property type="project" value="UniProtKB-KW"/>
</dbReference>
<dbReference type="GO" id="GO:0005856">
    <property type="term" value="C:cytoskeleton"/>
    <property type="evidence" value="ECO:0007669"/>
    <property type="project" value="UniProtKB-SubCell"/>
</dbReference>
<dbReference type="GO" id="GO:0005634">
    <property type="term" value="C:nucleus"/>
    <property type="evidence" value="ECO:0007669"/>
    <property type="project" value="UniProtKB-SubCell"/>
</dbReference>
<dbReference type="PANTHER" id="PTHR13595">
    <property type="entry name" value="ARL6IP4 PROTEIN"/>
    <property type="match status" value="1"/>
</dbReference>
<dbReference type="PANTHER" id="PTHR13595:SF4">
    <property type="entry name" value="CHROMOSOME UNDETERMINED SCAFFOLD_77, WHOLE GENOME SHOTGUN SEQUENCE"/>
    <property type="match status" value="1"/>
</dbReference>
<accession>Q54ET6</accession>
<proteinExistence type="evidence at protein level"/>
<evidence type="ECO:0000255" key="1"/>
<evidence type="ECO:0000256" key="2">
    <source>
        <dbReference type="SAM" id="MobiDB-lite"/>
    </source>
</evidence>
<evidence type="ECO:0000269" key="3">
    <source ref="2"/>
</evidence>